<comment type="function">
    <text evidence="1">Involved in allosteric regulation of aspartate carbamoyltransferase.</text>
</comment>
<comment type="cofactor">
    <cofactor evidence="1">
        <name>Zn(2+)</name>
        <dbReference type="ChEBI" id="CHEBI:29105"/>
    </cofactor>
    <text evidence="1">Binds 1 zinc ion per subunit.</text>
</comment>
<comment type="subunit">
    <text evidence="1">Contains catalytic and regulatory chains.</text>
</comment>
<comment type="similarity">
    <text evidence="1">Belongs to the PyrI family.</text>
</comment>
<organism>
    <name type="scientific">Neisseria meningitidis serogroup A / serotype 4A (strain DSM 15465 / Z2491)</name>
    <dbReference type="NCBI Taxonomy" id="122587"/>
    <lineage>
        <taxon>Bacteria</taxon>
        <taxon>Pseudomonadati</taxon>
        <taxon>Pseudomonadota</taxon>
        <taxon>Betaproteobacteria</taxon>
        <taxon>Neisseriales</taxon>
        <taxon>Neisseriaceae</taxon>
        <taxon>Neisseria</taxon>
    </lineage>
</organism>
<name>PYRI_NEIMA</name>
<dbReference type="EMBL" id="AL157959">
    <property type="protein sequence ID" value="CAM07484.1"/>
    <property type="molecule type" value="Genomic_DNA"/>
</dbReference>
<dbReference type="PIR" id="D82010">
    <property type="entry name" value="D82010"/>
</dbReference>
<dbReference type="RefSeq" id="WP_002245782.1">
    <property type="nucleotide sequence ID" value="NC_003116.1"/>
</dbReference>
<dbReference type="SMR" id="Q9JWY6"/>
<dbReference type="EnsemblBacteria" id="CAM07484">
    <property type="protein sequence ID" value="CAM07484"/>
    <property type="gene ID" value="NMA0167"/>
</dbReference>
<dbReference type="GeneID" id="93387179"/>
<dbReference type="KEGG" id="nma:NMA0167"/>
<dbReference type="HOGENOM" id="CLU_128576_0_0_4"/>
<dbReference type="Proteomes" id="UP000000626">
    <property type="component" value="Chromosome"/>
</dbReference>
<dbReference type="GO" id="GO:0009347">
    <property type="term" value="C:aspartate carbamoyltransferase complex"/>
    <property type="evidence" value="ECO:0007669"/>
    <property type="project" value="InterPro"/>
</dbReference>
<dbReference type="GO" id="GO:0046872">
    <property type="term" value="F:metal ion binding"/>
    <property type="evidence" value="ECO:0007669"/>
    <property type="project" value="UniProtKB-KW"/>
</dbReference>
<dbReference type="GO" id="GO:0006207">
    <property type="term" value="P:'de novo' pyrimidine nucleobase biosynthetic process"/>
    <property type="evidence" value="ECO:0007669"/>
    <property type="project" value="InterPro"/>
</dbReference>
<dbReference type="GO" id="GO:0006221">
    <property type="term" value="P:pyrimidine nucleotide biosynthetic process"/>
    <property type="evidence" value="ECO:0007669"/>
    <property type="project" value="UniProtKB-UniRule"/>
</dbReference>
<dbReference type="Gene3D" id="2.30.30.20">
    <property type="entry name" value="Aspartate carbamoyltransferase regulatory subunit, C-terminal domain"/>
    <property type="match status" value="1"/>
</dbReference>
<dbReference type="Gene3D" id="3.30.70.140">
    <property type="entry name" value="Aspartate carbamoyltransferase regulatory subunit, N-terminal domain"/>
    <property type="match status" value="1"/>
</dbReference>
<dbReference type="HAMAP" id="MF_00002">
    <property type="entry name" value="Asp_carb_tr_reg"/>
    <property type="match status" value="1"/>
</dbReference>
<dbReference type="InterPro" id="IPR020545">
    <property type="entry name" value="Asp_carbamoyltransf_reg_N"/>
</dbReference>
<dbReference type="InterPro" id="IPR002801">
    <property type="entry name" value="Asp_carbamoylTrfase_reg"/>
</dbReference>
<dbReference type="InterPro" id="IPR020542">
    <property type="entry name" value="Asp_carbamoyltrfase_reg_C"/>
</dbReference>
<dbReference type="InterPro" id="IPR036792">
    <property type="entry name" value="Asp_carbatrfase_reg_C_sf"/>
</dbReference>
<dbReference type="InterPro" id="IPR036793">
    <property type="entry name" value="Asp_carbatrfase_reg_N_sf"/>
</dbReference>
<dbReference type="NCBIfam" id="TIGR00240">
    <property type="entry name" value="ATCase_reg"/>
    <property type="match status" value="1"/>
</dbReference>
<dbReference type="PANTHER" id="PTHR35805">
    <property type="entry name" value="ASPARTATE CARBAMOYLTRANSFERASE REGULATORY CHAIN"/>
    <property type="match status" value="1"/>
</dbReference>
<dbReference type="PANTHER" id="PTHR35805:SF1">
    <property type="entry name" value="ASPARTATE CARBAMOYLTRANSFERASE REGULATORY CHAIN"/>
    <property type="match status" value="1"/>
</dbReference>
<dbReference type="Pfam" id="PF01948">
    <property type="entry name" value="PyrI"/>
    <property type="match status" value="1"/>
</dbReference>
<dbReference type="Pfam" id="PF02748">
    <property type="entry name" value="PyrI_C"/>
    <property type="match status" value="1"/>
</dbReference>
<dbReference type="SUPFAM" id="SSF57825">
    <property type="entry name" value="Aspartate carbamoyltransferase, Regulatory-chain, C-terminal domain"/>
    <property type="match status" value="1"/>
</dbReference>
<dbReference type="SUPFAM" id="SSF54893">
    <property type="entry name" value="Aspartate carbamoyltransferase, Regulatory-chain, N-terminal domain"/>
    <property type="match status" value="1"/>
</dbReference>
<gene>
    <name evidence="1" type="primary">pyrI</name>
    <name type="ordered locus">NMA0167</name>
</gene>
<proteinExistence type="inferred from homology"/>
<protein>
    <recommendedName>
        <fullName evidence="1">Aspartate carbamoyltransferase regulatory chain</fullName>
    </recommendedName>
</protein>
<evidence type="ECO:0000255" key="1">
    <source>
        <dbReference type="HAMAP-Rule" id="MF_00002"/>
    </source>
</evidence>
<keyword id="KW-0479">Metal-binding</keyword>
<keyword id="KW-0665">Pyrimidine biosynthesis</keyword>
<keyword id="KW-0862">Zinc</keyword>
<reference key="1">
    <citation type="journal article" date="2000" name="Nature">
        <title>Complete DNA sequence of a serogroup A strain of Neisseria meningitidis Z2491.</title>
        <authorList>
            <person name="Parkhill J."/>
            <person name="Achtman M."/>
            <person name="James K.D."/>
            <person name="Bentley S.D."/>
            <person name="Churcher C.M."/>
            <person name="Klee S.R."/>
            <person name="Morelli G."/>
            <person name="Basham D."/>
            <person name="Brown D."/>
            <person name="Chillingworth T."/>
            <person name="Davies R.M."/>
            <person name="Davis P."/>
            <person name="Devlin K."/>
            <person name="Feltwell T."/>
            <person name="Hamlin N."/>
            <person name="Holroyd S."/>
            <person name="Jagels K."/>
            <person name="Leather S."/>
            <person name="Moule S."/>
            <person name="Mungall K.L."/>
            <person name="Quail M.A."/>
            <person name="Rajandream M.A."/>
            <person name="Rutherford K.M."/>
            <person name="Simmonds M."/>
            <person name="Skelton J."/>
            <person name="Whitehead S."/>
            <person name="Spratt B.G."/>
            <person name="Barrell B.G."/>
        </authorList>
    </citation>
    <scope>NUCLEOTIDE SEQUENCE [LARGE SCALE GENOMIC DNA]</scope>
    <source>
        <strain>DSM 15465 / Z2491</strain>
    </source>
</reference>
<feature type="chain" id="PRO_0000142307" description="Aspartate carbamoyltransferase regulatory chain">
    <location>
        <begin position="1"/>
        <end position="152"/>
    </location>
</feature>
<feature type="binding site" evidence="1">
    <location>
        <position position="108"/>
    </location>
    <ligand>
        <name>Zn(2+)</name>
        <dbReference type="ChEBI" id="CHEBI:29105"/>
    </ligand>
</feature>
<feature type="binding site" evidence="1">
    <location>
        <position position="113"/>
    </location>
    <ligand>
        <name>Zn(2+)</name>
        <dbReference type="ChEBI" id="CHEBI:29105"/>
    </ligand>
</feature>
<feature type="binding site" evidence="1">
    <location>
        <position position="137"/>
    </location>
    <ligand>
        <name>Zn(2+)</name>
        <dbReference type="ChEBI" id="CHEBI:29105"/>
    </ligand>
</feature>
<feature type="binding site" evidence="1">
    <location>
        <position position="140"/>
    </location>
    <ligand>
        <name>Zn(2+)</name>
        <dbReference type="ChEBI" id="CHEBI:29105"/>
    </ligand>
</feature>
<sequence length="152" mass="16958">METPKLSVEAIEKGTVIDHIPAGRGLTILRQFKLLHYGNAVTVGFNLPSKTQGSKDIIKIKGVCLDDKAADRLALFAPEAVVNTIDHFKVVQKRHLNLPDEIAEVFRCPNTNCASHGEPVKSRFYVKKHNGQTRLKCHYCEKTYSRDSVAEA</sequence>
<accession>Q9JWY6</accession>
<accession>A1IP27</accession>